<evidence type="ECO:0000255" key="1">
    <source>
        <dbReference type="HAMAP-Rule" id="MF_00169"/>
    </source>
</evidence>
<feature type="chain" id="PRO_1000077052" description="3-dehydroquinate dehydratase">
    <location>
        <begin position="1"/>
        <end position="149"/>
    </location>
</feature>
<feature type="active site" description="Proton acceptor" evidence="1">
    <location>
        <position position="26"/>
    </location>
</feature>
<feature type="active site" description="Proton donor" evidence="1">
    <location>
        <position position="104"/>
    </location>
</feature>
<feature type="binding site" evidence="1">
    <location>
        <position position="78"/>
    </location>
    <ligand>
        <name>substrate</name>
    </ligand>
</feature>
<feature type="binding site" evidence="1">
    <location>
        <position position="84"/>
    </location>
    <ligand>
        <name>substrate</name>
    </ligand>
</feature>
<feature type="binding site" evidence="1">
    <location>
        <position position="91"/>
    </location>
    <ligand>
        <name>substrate</name>
    </ligand>
</feature>
<feature type="binding site" evidence="1">
    <location>
        <begin position="105"/>
        <end position="106"/>
    </location>
    <ligand>
        <name>substrate</name>
    </ligand>
</feature>
<feature type="binding site" evidence="1">
    <location>
        <position position="115"/>
    </location>
    <ligand>
        <name>substrate</name>
    </ligand>
</feature>
<feature type="site" description="Transition state stabilizer" evidence="1">
    <location>
        <position position="21"/>
    </location>
</feature>
<gene>
    <name evidence="1" type="primary">aroQ</name>
    <name type="ordered locus">Pnuc_0211</name>
</gene>
<comment type="function">
    <text evidence="1">Catalyzes a trans-dehydration via an enolate intermediate.</text>
</comment>
<comment type="catalytic activity">
    <reaction evidence="1">
        <text>3-dehydroquinate = 3-dehydroshikimate + H2O</text>
        <dbReference type="Rhea" id="RHEA:21096"/>
        <dbReference type="ChEBI" id="CHEBI:15377"/>
        <dbReference type="ChEBI" id="CHEBI:16630"/>
        <dbReference type="ChEBI" id="CHEBI:32364"/>
        <dbReference type="EC" id="4.2.1.10"/>
    </reaction>
</comment>
<comment type="pathway">
    <text evidence="1">Metabolic intermediate biosynthesis; chorismate biosynthesis; chorismate from D-erythrose 4-phosphate and phosphoenolpyruvate: step 3/7.</text>
</comment>
<comment type="subunit">
    <text evidence="1">Homododecamer.</text>
</comment>
<comment type="similarity">
    <text evidence="1">Belongs to the type-II 3-dehydroquinase family.</text>
</comment>
<protein>
    <recommendedName>
        <fullName evidence="1">3-dehydroquinate dehydratase</fullName>
        <shortName evidence="1">3-dehydroquinase</shortName>
        <ecNumber evidence="1">4.2.1.10</ecNumber>
    </recommendedName>
    <alternativeName>
        <fullName evidence="1">Type II DHQase</fullName>
    </alternativeName>
</protein>
<keyword id="KW-0028">Amino-acid biosynthesis</keyword>
<keyword id="KW-0057">Aromatic amino acid biosynthesis</keyword>
<keyword id="KW-0456">Lyase</keyword>
<keyword id="KW-1185">Reference proteome</keyword>
<sequence>MSKKASILVIQGPNLNLLGTREPDVYGKTTLEDIHQKLGELAKAQSVDLSTFQSNHEGELIDRIQKAKQDGVDFIIINPGAFTHTSVALRDVLAGVAIPFTEVHLSNIHQREEFRKHSYLSDIANGVICGLGAIGYELALQAAIARLQR</sequence>
<proteinExistence type="inferred from homology"/>
<name>AROQ_POLAQ</name>
<reference key="1">
    <citation type="journal article" date="2012" name="Stand. Genomic Sci.">
        <title>Complete genome sequence of Polynucleobacter necessarius subsp. asymbioticus type strain (QLW-P1DMWA-1(T)).</title>
        <authorList>
            <person name="Meincke L."/>
            <person name="Copeland A."/>
            <person name="Lapidus A."/>
            <person name="Lucas S."/>
            <person name="Berry K.W."/>
            <person name="Del Rio T.G."/>
            <person name="Hammon N."/>
            <person name="Dalin E."/>
            <person name="Tice H."/>
            <person name="Pitluck S."/>
            <person name="Richardson P."/>
            <person name="Bruce D."/>
            <person name="Goodwin L."/>
            <person name="Han C."/>
            <person name="Tapia R."/>
            <person name="Detter J.C."/>
            <person name="Schmutz J."/>
            <person name="Brettin T."/>
            <person name="Larimer F."/>
            <person name="Land M."/>
            <person name="Hauser L."/>
            <person name="Kyrpides N.C."/>
            <person name="Ivanova N."/>
            <person name="Goker M."/>
            <person name="Woyke T."/>
            <person name="Wu Q.L."/>
            <person name="Pockl M."/>
            <person name="Hahn M.W."/>
            <person name="Klenk H.P."/>
        </authorList>
    </citation>
    <scope>NUCLEOTIDE SEQUENCE [LARGE SCALE GENOMIC DNA]</scope>
    <source>
        <strain>DSM 18221 / CIP 109841 / QLW-P1DMWA-1</strain>
    </source>
</reference>
<accession>A4SVB8</accession>
<dbReference type="EC" id="4.2.1.10" evidence="1"/>
<dbReference type="EMBL" id="CP000655">
    <property type="protein sequence ID" value="ABP33432.1"/>
    <property type="molecule type" value="Genomic_DNA"/>
</dbReference>
<dbReference type="RefSeq" id="WP_011902057.1">
    <property type="nucleotide sequence ID" value="NC_009379.1"/>
</dbReference>
<dbReference type="SMR" id="A4SVB8"/>
<dbReference type="GeneID" id="31480561"/>
<dbReference type="KEGG" id="pnu:Pnuc_0211"/>
<dbReference type="eggNOG" id="COG0757">
    <property type="taxonomic scope" value="Bacteria"/>
</dbReference>
<dbReference type="HOGENOM" id="CLU_090968_1_0_4"/>
<dbReference type="UniPathway" id="UPA00053">
    <property type="reaction ID" value="UER00086"/>
</dbReference>
<dbReference type="Proteomes" id="UP000000231">
    <property type="component" value="Chromosome"/>
</dbReference>
<dbReference type="GO" id="GO:0003855">
    <property type="term" value="F:3-dehydroquinate dehydratase activity"/>
    <property type="evidence" value="ECO:0007669"/>
    <property type="project" value="UniProtKB-UniRule"/>
</dbReference>
<dbReference type="GO" id="GO:0008652">
    <property type="term" value="P:amino acid biosynthetic process"/>
    <property type="evidence" value="ECO:0007669"/>
    <property type="project" value="UniProtKB-KW"/>
</dbReference>
<dbReference type="GO" id="GO:0009073">
    <property type="term" value="P:aromatic amino acid family biosynthetic process"/>
    <property type="evidence" value="ECO:0007669"/>
    <property type="project" value="UniProtKB-KW"/>
</dbReference>
<dbReference type="GO" id="GO:0009423">
    <property type="term" value="P:chorismate biosynthetic process"/>
    <property type="evidence" value="ECO:0007669"/>
    <property type="project" value="UniProtKB-UniRule"/>
</dbReference>
<dbReference type="GO" id="GO:0019631">
    <property type="term" value="P:quinate catabolic process"/>
    <property type="evidence" value="ECO:0007669"/>
    <property type="project" value="TreeGrafter"/>
</dbReference>
<dbReference type="CDD" id="cd00466">
    <property type="entry name" value="DHQase_II"/>
    <property type="match status" value="1"/>
</dbReference>
<dbReference type="Gene3D" id="3.40.50.9100">
    <property type="entry name" value="Dehydroquinase, class II"/>
    <property type="match status" value="1"/>
</dbReference>
<dbReference type="HAMAP" id="MF_00169">
    <property type="entry name" value="AroQ"/>
    <property type="match status" value="1"/>
</dbReference>
<dbReference type="InterPro" id="IPR001874">
    <property type="entry name" value="DHquinase_II"/>
</dbReference>
<dbReference type="InterPro" id="IPR018509">
    <property type="entry name" value="DHquinase_II_CS"/>
</dbReference>
<dbReference type="InterPro" id="IPR036441">
    <property type="entry name" value="DHquinase_II_sf"/>
</dbReference>
<dbReference type="NCBIfam" id="TIGR01088">
    <property type="entry name" value="aroQ"/>
    <property type="match status" value="1"/>
</dbReference>
<dbReference type="NCBIfam" id="NF003804">
    <property type="entry name" value="PRK05395.1-1"/>
    <property type="match status" value="1"/>
</dbReference>
<dbReference type="NCBIfam" id="NF003805">
    <property type="entry name" value="PRK05395.1-2"/>
    <property type="match status" value="1"/>
</dbReference>
<dbReference type="NCBIfam" id="NF003806">
    <property type="entry name" value="PRK05395.1-3"/>
    <property type="match status" value="1"/>
</dbReference>
<dbReference type="NCBIfam" id="NF003807">
    <property type="entry name" value="PRK05395.1-4"/>
    <property type="match status" value="1"/>
</dbReference>
<dbReference type="PANTHER" id="PTHR21272">
    <property type="entry name" value="CATABOLIC 3-DEHYDROQUINASE"/>
    <property type="match status" value="1"/>
</dbReference>
<dbReference type="PANTHER" id="PTHR21272:SF3">
    <property type="entry name" value="CATABOLIC 3-DEHYDROQUINASE"/>
    <property type="match status" value="1"/>
</dbReference>
<dbReference type="Pfam" id="PF01220">
    <property type="entry name" value="DHquinase_II"/>
    <property type="match status" value="1"/>
</dbReference>
<dbReference type="PIRSF" id="PIRSF001399">
    <property type="entry name" value="DHquinase_II"/>
    <property type="match status" value="1"/>
</dbReference>
<dbReference type="SUPFAM" id="SSF52304">
    <property type="entry name" value="Type II 3-dehydroquinate dehydratase"/>
    <property type="match status" value="1"/>
</dbReference>
<dbReference type="PROSITE" id="PS01029">
    <property type="entry name" value="DEHYDROQUINASE_II"/>
    <property type="match status" value="1"/>
</dbReference>
<organism>
    <name type="scientific">Polynucleobacter asymbioticus (strain DSM 18221 / CIP 109841 / QLW-P1DMWA-1)</name>
    <name type="common">Polynucleobacter necessarius subsp. asymbioticus</name>
    <dbReference type="NCBI Taxonomy" id="312153"/>
    <lineage>
        <taxon>Bacteria</taxon>
        <taxon>Pseudomonadati</taxon>
        <taxon>Pseudomonadota</taxon>
        <taxon>Betaproteobacteria</taxon>
        <taxon>Burkholderiales</taxon>
        <taxon>Burkholderiaceae</taxon>
        <taxon>Polynucleobacter</taxon>
    </lineage>
</organism>